<name>SYH_PSYWF</name>
<evidence type="ECO:0000255" key="1">
    <source>
        <dbReference type="HAMAP-Rule" id="MF_00127"/>
    </source>
</evidence>
<accession>A5WGQ0</accession>
<feature type="chain" id="PRO_1000071406" description="Histidine--tRNA ligase">
    <location>
        <begin position="1"/>
        <end position="436"/>
    </location>
</feature>
<gene>
    <name evidence="1" type="primary">hisS</name>
    <name type="ordered locus">PsycPRwf_1901</name>
</gene>
<dbReference type="EC" id="6.1.1.21" evidence="1"/>
<dbReference type="EMBL" id="CP000713">
    <property type="protein sequence ID" value="ABQ94841.1"/>
    <property type="molecule type" value="Genomic_DNA"/>
</dbReference>
<dbReference type="SMR" id="A5WGQ0"/>
<dbReference type="STRING" id="349106.PsycPRwf_1901"/>
<dbReference type="KEGG" id="prw:PsycPRwf_1901"/>
<dbReference type="eggNOG" id="COG0124">
    <property type="taxonomic scope" value="Bacteria"/>
</dbReference>
<dbReference type="HOGENOM" id="CLU_025113_1_0_6"/>
<dbReference type="GO" id="GO:0005737">
    <property type="term" value="C:cytoplasm"/>
    <property type="evidence" value="ECO:0007669"/>
    <property type="project" value="UniProtKB-SubCell"/>
</dbReference>
<dbReference type="GO" id="GO:0005524">
    <property type="term" value="F:ATP binding"/>
    <property type="evidence" value="ECO:0007669"/>
    <property type="project" value="UniProtKB-UniRule"/>
</dbReference>
<dbReference type="GO" id="GO:0004821">
    <property type="term" value="F:histidine-tRNA ligase activity"/>
    <property type="evidence" value="ECO:0007669"/>
    <property type="project" value="UniProtKB-UniRule"/>
</dbReference>
<dbReference type="GO" id="GO:0006427">
    <property type="term" value="P:histidyl-tRNA aminoacylation"/>
    <property type="evidence" value="ECO:0007669"/>
    <property type="project" value="UniProtKB-UniRule"/>
</dbReference>
<dbReference type="CDD" id="cd00773">
    <property type="entry name" value="HisRS-like_core"/>
    <property type="match status" value="1"/>
</dbReference>
<dbReference type="FunFam" id="3.30.930.10:FF:000005">
    <property type="entry name" value="Histidine--tRNA ligase"/>
    <property type="match status" value="1"/>
</dbReference>
<dbReference type="Gene3D" id="3.40.50.800">
    <property type="entry name" value="Anticodon-binding domain"/>
    <property type="match status" value="1"/>
</dbReference>
<dbReference type="Gene3D" id="3.30.930.10">
    <property type="entry name" value="Bira Bifunctional Protein, Domain 2"/>
    <property type="match status" value="1"/>
</dbReference>
<dbReference type="HAMAP" id="MF_00127">
    <property type="entry name" value="His_tRNA_synth"/>
    <property type="match status" value="1"/>
</dbReference>
<dbReference type="InterPro" id="IPR006195">
    <property type="entry name" value="aa-tRNA-synth_II"/>
</dbReference>
<dbReference type="InterPro" id="IPR045864">
    <property type="entry name" value="aa-tRNA-synth_II/BPL/LPL"/>
</dbReference>
<dbReference type="InterPro" id="IPR004154">
    <property type="entry name" value="Anticodon-bd"/>
</dbReference>
<dbReference type="InterPro" id="IPR036621">
    <property type="entry name" value="Anticodon-bd_dom_sf"/>
</dbReference>
<dbReference type="InterPro" id="IPR015807">
    <property type="entry name" value="His-tRNA-ligase"/>
</dbReference>
<dbReference type="InterPro" id="IPR041715">
    <property type="entry name" value="HisRS-like_core"/>
</dbReference>
<dbReference type="InterPro" id="IPR004516">
    <property type="entry name" value="HisRS/HisZ"/>
</dbReference>
<dbReference type="NCBIfam" id="TIGR00442">
    <property type="entry name" value="hisS"/>
    <property type="match status" value="1"/>
</dbReference>
<dbReference type="PANTHER" id="PTHR43707:SF1">
    <property type="entry name" value="HISTIDINE--TRNA LIGASE, MITOCHONDRIAL-RELATED"/>
    <property type="match status" value="1"/>
</dbReference>
<dbReference type="PANTHER" id="PTHR43707">
    <property type="entry name" value="HISTIDYL-TRNA SYNTHETASE"/>
    <property type="match status" value="1"/>
</dbReference>
<dbReference type="Pfam" id="PF03129">
    <property type="entry name" value="HGTP_anticodon"/>
    <property type="match status" value="1"/>
</dbReference>
<dbReference type="Pfam" id="PF13393">
    <property type="entry name" value="tRNA-synt_His"/>
    <property type="match status" value="1"/>
</dbReference>
<dbReference type="PIRSF" id="PIRSF001549">
    <property type="entry name" value="His-tRNA_synth"/>
    <property type="match status" value="1"/>
</dbReference>
<dbReference type="SUPFAM" id="SSF52954">
    <property type="entry name" value="Class II aaRS ABD-related"/>
    <property type="match status" value="1"/>
</dbReference>
<dbReference type="SUPFAM" id="SSF55681">
    <property type="entry name" value="Class II aaRS and biotin synthetases"/>
    <property type="match status" value="1"/>
</dbReference>
<dbReference type="PROSITE" id="PS50862">
    <property type="entry name" value="AA_TRNA_LIGASE_II"/>
    <property type="match status" value="1"/>
</dbReference>
<keyword id="KW-0030">Aminoacyl-tRNA synthetase</keyword>
<keyword id="KW-0067">ATP-binding</keyword>
<keyword id="KW-0963">Cytoplasm</keyword>
<keyword id="KW-0436">Ligase</keyword>
<keyword id="KW-0547">Nucleotide-binding</keyword>
<keyword id="KW-0648">Protein biosynthesis</keyword>
<proteinExistence type="inferred from homology"/>
<organism>
    <name type="scientific">Psychrobacter sp. (strain PRwf-1)</name>
    <dbReference type="NCBI Taxonomy" id="349106"/>
    <lineage>
        <taxon>Bacteria</taxon>
        <taxon>Pseudomonadati</taxon>
        <taxon>Pseudomonadota</taxon>
        <taxon>Gammaproteobacteria</taxon>
        <taxon>Moraxellales</taxon>
        <taxon>Moraxellaceae</taxon>
        <taxon>Psychrobacter</taxon>
    </lineage>
</organism>
<protein>
    <recommendedName>
        <fullName evidence="1">Histidine--tRNA ligase</fullName>
        <ecNumber evidence="1">6.1.1.21</ecNumber>
    </recommendedName>
    <alternativeName>
        <fullName evidence="1">Histidyl-tRNA synthetase</fullName>
        <shortName evidence="1">HisRS</shortName>
    </alternativeName>
</protein>
<sequence>MIKSIKGFNDILQVETATSRPSSEWRQLEAMLKQALDQFGYEEIRLPIVEETQLFARAIGDATDIVEKEMFSFTDKSDPPTPITLRPEGTAGAVRAVIEHNLLRGDSPKLWYMGPMFRYEQPQKGRYRQFHQLGVEAFGSEHVDVEAELIAMTYLMWQRLGIDHELSLEINSLGELDERKAYRSALVEFLQTKKEQLDEDSQRRLTTNPLRILDSKDPNTQALLMEAPRLADFLGEDSQAHFEQLKTYLTALGIEYVVNPNLVRGLDYYNKTVFEWVTDKLGSQATVCAGGRYDGLIGQLKSIGKSEDKAKAVKSEPAVGFAMGLERLLLLVQAVNPIQAQPACDVFVVVHPDLYQQGLLYAQSLRQARSDLRVKMASASSLKAQMKKADKSGAQLTVILAQDEVESGTISVKTMHTGEQVSQDKLWLHSAENFRL</sequence>
<comment type="catalytic activity">
    <reaction evidence="1">
        <text>tRNA(His) + L-histidine + ATP = L-histidyl-tRNA(His) + AMP + diphosphate + H(+)</text>
        <dbReference type="Rhea" id="RHEA:17313"/>
        <dbReference type="Rhea" id="RHEA-COMP:9665"/>
        <dbReference type="Rhea" id="RHEA-COMP:9689"/>
        <dbReference type="ChEBI" id="CHEBI:15378"/>
        <dbReference type="ChEBI" id="CHEBI:30616"/>
        <dbReference type="ChEBI" id="CHEBI:33019"/>
        <dbReference type="ChEBI" id="CHEBI:57595"/>
        <dbReference type="ChEBI" id="CHEBI:78442"/>
        <dbReference type="ChEBI" id="CHEBI:78527"/>
        <dbReference type="ChEBI" id="CHEBI:456215"/>
        <dbReference type="EC" id="6.1.1.21"/>
    </reaction>
</comment>
<comment type="subunit">
    <text evidence="1">Homodimer.</text>
</comment>
<comment type="subcellular location">
    <subcellularLocation>
        <location evidence="1">Cytoplasm</location>
    </subcellularLocation>
</comment>
<comment type="similarity">
    <text evidence="1">Belongs to the class-II aminoacyl-tRNA synthetase family.</text>
</comment>
<reference key="1">
    <citation type="submission" date="2007-05" db="EMBL/GenBank/DDBJ databases">
        <title>Complete sequence of chromosome of Psychrobacter sp. PRwf-1.</title>
        <authorList>
            <consortium name="US DOE Joint Genome Institute"/>
            <person name="Copeland A."/>
            <person name="Lucas S."/>
            <person name="Lapidus A."/>
            <person name="Barry K."/>
            <person name="Detter J.C."/>
            <person name="Glavina del Rio T."/>
            <person name="Hammon N."/>
            <person name="Israni S."/>
            <person name="Dalin E."/>
            <person name="Tice H."/>
            <person name="Pitluck S."/>
            <person name="Chain P."/>
            <person name="Malfatti S."/>
            <person name="Shin M."/>
            <person name="Vergez L."/>
            <person name="Schmutz J."/>
            <person name="Larimer F."/>
            <person name="Land M."/>
            <person name="Hauser L."/>
            <person name="Kyrpides N."/>
            <person name="Kim E."/>
            <person name="Tiedje J."/>
            <person name="Richardson P."/>
        </authorList>
    </citation>
    <scope>NUCLEOTIDE SEQUENCE [LARGE SCALE GENOMIC DNA]</scope>
    <source>
        <strain>PRwf-1</strain>
    </source>
</reference>